<proteinExistence type="inferred from homology"/>
<comment type="function">
    <text evidence="1">Catalyzes the conversion of lactate to pyruvate.</text>
</comment>
<comment type="catalytic activity">
    <reaction evidence="1">
        <text>(S)-lactate + NAD(+) = pyruvate + NADH + H(+)</text>
        <dbReference type="Rhea" id="RHEA:23444"/>
        <dbReference type="ChEBI" id="CHEBI:15361"/>
        <dbReference type="ChEBI" id="CHEBI:15378"/>
        <dbReference type="ChEBI" id="CHEBI:16651"/>
        <dbReference type="ChEBI" id="CHEBI:57540"/>
        <dbReference type="ChEBI" id="CHEBI:57945"/>
        <dbReference type="EC" id="1.1.1.27"/>
    </reaction>
</comment>
<comment type="activity regulation">
    <text evidence="1">Allosterically activated by fructose 1,6-bisphosphate (FBP).</text>
</comment>
<comment type="pathway">
    <text evidence="1">Fermentation; pyruvate fermentation to lactate; (S)-lactate from pyruvate: step 1/1.</text>
</comment>
<comment type="subunit">
    <text evidence="1">Homotetramer.</text>
</comment>
<comment type="subcellular location">
    <subcellularLocation>
        <location evidence="1">Cytoplasm</location>
    </subcellularLocation>
</comment>
<comment type="similarity">
    <text evidence="1">Belongs to the LDH/MDH superfamily. LDH family.</text>
</comment>
<name>LDH_STRT2</name>
<organism>
    <name type="scientific">Streptococcus thermophilus (strain ATCC BAA-250 / LMG 18311)</name>
    <dbReference type="NCBI Taxonomy" id="264199"/>
    <lineage>
        <taxon>Bacteria</taxon>
        <taxon>Bacillati</taxon>
        <taxon>Bacillota</taxon>
        <taxon>Bacilli</taxon>
        <taxon>Lactobacillales</taxon>
        <taxon>Streptococcaceae</taxon>
        <taxon>Streptococcus</taxon>
    </lineage>
</organism>
<accession>Q5M3T6</accession>
<gene>
    <name evidence="1" type="primary">ldh</name>
    <name type="ordered locus">stu1280</name>
</gene>
<sequence>MTATKLHKKVILVGDGAVGSSYAFALVNQGIAQELGIIEIPQLFEKAVGDALDLSHALPFTSPKKIYAAKYEDCADADLVVITAGAPQKPGETRLDLVGKNLAINKSIVTQVVESGFNGIFLVAANPVDVLTYSTWKFSGFPKERVIGSGTSLDSARFRQALAEKLNVDARSVHAYIMGEHGDSEFAVWSHANIAGVNLEEFLKDEENVQEAELVELFEGVRDAAYTIINKKGATYYGIAVALARITKAILDDENAVLPLSVFQEGQYGVNNIFIGQPAIVGAHGIVRPVNIPLNDAEQQKMKASADELQAIIDEAWKNPEFQEASKN</sequence>
<reference key="1">
    <citation type="journal article" date="2004" name="Nat. Biotechnol.">
        <title>Complete sequence and comparative genome analysis of the dairy bacterium Streptococcus thermophilus.</title>
        <authorList>
            <person name="Bolotin A."/>
            <person name="Quinquis B."/>
            <person name="Renault P."/>
            <person name="Sorokin A."/>
            <person name="Ehrlich S.D."/>
            <person name="Kulakauskas S."/>
            <person name="Lapidus A."/>
            <person name="Goltsman E."/>
            <person name="Mazur M."/>
            <person name="Pusch G.D."/>
            <person name="Fonstein M."/>
            <person name="Overbeek R."/>
            <person name="Kyprides N."/>
            <person name="Purnelle B."/>
            <person name="Prozzi D."/>
            <person name="Ngui K."/>
            <person name="Masuy D."/>
            <person name="Hancy F."/>
            <person name="Burteau S."/>
            <person name="Boutry M."/>
            <person name="Delcour J."/>
            <person name="Goffeau A."/>
            <person name="Hols P."/>
        </authorList>
    </citation>
    <scope>NUCLEOTIDE SEQUENCE [LARGE SCALE GENOMIC DNA]</scope>
    <source>
        <strain>ATCC BAA-250 / LMG 18311</strain>
    </source>
</reference>
<protein>
    <recommendedName>
        <fullName evidence="1">L-lactate dehydrogenase</fullName>
        <shortName evidence="1">L-LDH</shortName>
        <ecNumber evidence="1">1.1.1.27</ecNumber>
    </recommendedName>
</protein>
<keyword id="KW-0021">Allosteric enzyme</keyword>
<keyword id="KW-0963">Cytoplasm</keyword>
<keyword id="KW-0520">NAD</keyword>
<keyword id="KW-0560">Oxidoreductase</keyword>
<keyword id="KW-0597">Phosphoprotein</keyword>
<keyword id="KW-1185">Reference proteome</keyword>
<feature type="chain" id="PRO_0000237565" description="L-lactate dehydrogenase">
    <location>
        <begin position="1"/>
        <end position="328"/>
    </location>
</feature>
<feature type="active site" description="Proton acceptor" evidence="1">
    <location>
        <position position="181"/>
    </location>
</feature>
<feature type="binding site" evidence="1">
    <location>
        <position position="18"/>
    </location>
    <ligand>
        <name>NAD(+)</name>
        <dbReference type="ChEBI" id="CHEBI:57540"/>
    </ligand>
</feature>
<feature type="binding site" evidence="1">
    <location>
        <position position="39"/>
    </location>
    <ligand>
        <name>NAD(+)</name>
        <dbReference type="ChEBI" id="CHEBI:57540"/>
    </ligand>
</feature>
<feature type="binding site" evidence="1">
    <location>
        <position position="46"/>
    </location>
    <ligand>
        <name>NAD(+)</name>
        <dbReference type="ChEBI" id="CHEBI:57540"/>
    </ligand>
</feature>
<feature type="binding site" evidence="1">
    <location>
        <position position="71"/>
    </location>
    <ligand>
        <name>NAD(+)</name>
        <dbReference type="ChEBI" id="CHEBI:57540"/>
    </ligand>
</feature>
<feature type="binding site" evidence="1">
    <location>
        <begin position="85"/>
        <end position="86"/>
    </location>
    <ligand>
        <name>NAD(+)</name>
        <dbReference type="ChEBI" id="CHEBI:57540"/>
    </ligand>
</feature>
<feature type="binding site" evidence="1">
    <location>
        <position position="88"/>
    </location>
    <ligand>
        <name>substrate</name>
    </ligand>
</feature>
<feature type="binding site" evidence="1">
    <location>
        <position position="94"/>
    </location>
    <ligand>
        <name>substrate</name>
    </ligand>
</feature>
<feature type="binding site" evidence="1">
    <location>
        <position position="107"/>
    </location>
    <ligand>
        <name>NAD(+)</name>
        <dbReference type="ChEBI" id="CHEBI:57540"/>
    </ligand>
</feature>
<feature type="binding site" evidence="1">
    <location>
        <begin position="124"/>
        <end position="126"/>
    </location>
    <ligand>
        <name>NAD(+)</name>
        <dbReference type="ChEBI" id="CHEBI:57540"/>
    </ligand>
</feature>
<feature type="binding site" evidence="1">
    <location>
        <begin position="126"/>
        <end position="129"/>
    </location>
    <ligand>
        <name>substrate</name>
    </ligand>
</feature>
<feature type="binding site" evidence="1">
    <location>
        <position position="149"/>
    </location>
    <ligand>
        <name>NAD(+)</name>
        <dbReference type="ChEBI" id="CHEBI:57540"/>
    </ligand>
</feature>
<feature type="binding site" evidence="1">
    <location>
        <begin position="154"/>
        <end position="157"/>
    </location>
    <ligand>
        <name>substrate</name>
    </ligand>
</feature>
<feature type="binding site" evidence="1">
    <location>
        <position position="159"/>
    </location>
    <ligand>
        <name>beta-D-fructose 1,6-bisphosphate</name>
        <dbReference type="ChEBI" id="CHEBI:32966"/>
        <note>allosteric activator</note>
    </ligand>
</feature>
<feature type="binding site" evidence="1">
    <location>
        <position position="174"/>
    </location>
    <ligand>
        <name>beta-D-fructose 1,6-bisphosphate</name>
        <dbReference type="ChEBI" id="CHEBI:32966"/>
        <note>allosteric activator</note>
    </ligand>
</feature>
<feature type="binding site" evidence="1">
    <location>
        <position position="235"/>
    </location>
    <ligand>
        <name>substrate</name>
    </ligand>
</feature>
<feature type="modified residue" description="Phosphotyrosine" evidence="1">
    <location>
        <position position="226"/>
    </location>
</feature>
<dbReference type="EC" id="1.1.1.27" evidence="1"/>
<dbReference type="EMBL" id="CP000023">
    <property type="protein sequence ID" value="AAV60912.1"/>
    <property type="molecule type" value="Genomic_DNA"/>
</dbReference>
<dbReference type="RefSeq" id="WP_011226177.1">
    <property type="nucleotide sequence ID" value="NC_006448.1"/>
</dbReference>
<dbReference type="SMR" id="Q5M3T6"/>
<dbReference type="STRING" id="264199.stu1280"/>
<dbReference type="KEGG" id="stl:stu1280"/>
<dbReference type="eggNOG" id="COG0039">
    <property type="taxonomic scope" value="Bacteria"/>
</dbReference>
<dbReference type="HOGENOM" id="CLU_045401_1_1_9"/>
<dbReference type="UniPathway" id="UPA00554">
    <property type="reaction ID" value="UER00611"/>
</dbReference>
<dbReference type="Proteomes" id="UP000001170">
    <property type="component" value="Chromosome"/>
</dbReference>
<dbReference type="GO" id="GO:0005737">
    <property type="term" value="C:cytoplasm"/>
    <property type="evidence" value="ECO:0007669"/>
    <property type="project" value="UniProtKB-SubCell"/>
</dbReference>
<dbReference type="GO" id="GO:0004459">
    <property type="term" value="F:L-lactate dehydrogenase activity"/>
    <property type="evidence" value="ECO:0007669"/>
    <property type="project" value="UniProtKB-UniRule"/>
</dbReference>
<dbReference type="GO" id="GO:0006096">
    <property type="term" value="P:glycolytic process"/>
    <property type="evidence" value="ECO:0007669"/>
    <property type="project" value="UniProtKB-UniRule"/>
</dbReference>
<dbReference type="GO" id="GO:0006089">
    <property type="term" value="P:lactate metabolic process"/>
    <property type="evidence" value="ECO:0007669"/>
    <property type="project" value="TreeGrafter"/>
</dbReference>
<dbReference type="CDD" id="cd05291">
    <property type="entry name" value="HicDH_like"/>
    <property type="match status" value="1"/>
</dbReference>
<dbReference type="FunFam" id="3.40.50.720:FF:000018">
    <property type="entry name" value="Malate dehydrogenase"/>
    <property type="match status" value="1"/>
</dbReference>
<dbReference type="Gene3D" id="3.90.110.10">
    <property type="entry name" value="Lactate dehydrogenase/glycoside hydrolase, family 4, C-terminal"/>
    <property type="match status" value="1"/>
</dbReference>
<dbReference type="Gene3D" id="3.40.50.720">
    <property type="entry name" value="NAD(P)-binding Rossmann-like Domain"/>
    <property type="match status" value="1"/>
</dbReference>
<dbReference type="HAMAP" id="MF_00488">
    <property type="entry name" value="Lactate_dehydrog"/>
    <property type="match status" value="1"/>
</dbReference>
<dbReference type="InterPro" id="IPR001557">
    <property type="entry name" value="L-lactate/malate_DH"/>
</dbReference>
<dbReference type="InterPro" id="IPR011304">
    <property type="entry name" value="L-lactate_DH"/>
</dbReference>
<dbReference type="InterPro" id="IPR018177">
    <property type="entry name" value="L-lactate_DH_AS"/>
</dbReference>
<dbReference type="InterPro" id="IPR022383">
    <property type="entry name" value="Lactate/malate_DH_C"/>
</dbReference>
<dbReference type="InterPro" id="IPR001236">
    <property type="entry name" value="Lactate/malate_DH_N"/>
</dbReference>
<dbReference type="InterPro" id="IPR015955">
    <property type="entry name" value="Lactate_DH/Glyco_Ohase_4_C"/>
</dbReference>
<dbReference type="InterPro" id="IPR036291">
    <property type="entry name" value="NAD(P)-bd_dom_sf"/>
</dbReference>
<dbReference type="NCBIfam" id="TIGR01771">
    <property type="entry name" value="L-LDH-NAD"/>
    <property type="match status" value="1"/>
</dbReference>
<dbReference type="NCBIfam" id="NF000824">
    <property type="entry name" value="PRK00066.1"/>
    <property type="match status" value="1"/>
</dbReference>
<dbReference type="PANTHER" id="PTHR43128">
    <property type="entry name" value="L-2-HYDROXYCARBOXYLATE DEHYDROGENASE (NAD(P)(+))"/>
    <property type="match status" value="1"/>
</dbReference>
<dbReference type="PANTHER" id="PTHR43128:SF16">
    <property type="entry name" value="L-LACTATE DEHYDROGENASE"/>
    <property type="match status" value="1"/>
</dbReference>
<dbReference type="Pfam" id="PF02866">
    <property type="entry name" value="Ldh_1_C"/>
    <property type="match status" value="1"/>
</dbReference>
<dbReference type="Pfam" id="PF00056">
    <property type="entry name" value="Ldh_1_N"/>
    <property type="match status" value="1"/>
</dbReference>
<dbReference type="PIRSF" id="PIRSF000102">
    <property type="entry name" value="Lac_mal_DH"/>
    <property type="match status" value="1"/>
</dbReference>
<dbReference type="PRINTS" id="PR00086">
    <property type="entry name" value="LLDHDRGNASE"/>
</dbReference>
<dbReference type="SUPFAM" id="SSF56327">
    <property type="entry name" value="LDH C-terminal domain-like"/>
    <property type="match status" value="1"/>
</dbReference>
<dbReference type="SUPFAM" id="SSF51735">
    <property type="entry name" value="NAD(P)-binding Rossmann-fold domains"/>
    <property type="match status" value="1"/>
</dbReference>
<dbReference type="PROSITE" id="PS00064">
    <property type="entry name" value="L_LDH"/>
    <property type="match status" value="1"/>
</dbReference>
<evidence type="ECO:0000255" key="1">
    <source>
        <dbReference type="HAMAP-Rule" id="MF_00488"/>
    </source>
</evidence>